<feature type="chain" id="PRO_1000057182" description="Phosphate acyltransferase">
    <location>
        <begin position="1"/>
        <end position="333"/>
    </location>
</feature>
<protein>
    <recommendedName>
        <fullName evidence="1">Phosphate acyltransferase</fullName>
        <ecNumber evidence="1">2.3.1.274</ecNumber>
    </recommendedName>
    <alternativeName>
        <fullName evidence="1">Acyl-ACP phosphotransacylase</fullName>
    </alternativeName>
    <alternativeName>
        <fullName evidence="1">Acyl-[acyl-carrier-protein]--phosphate acyltransferase</fullName>
    </alternativeName>
    <alternativeName>
        <fullName evidence="1">Phosphate-acyl-ACP acyltransferase</fullName>
    </alternativeName>
</protein>
<keyword id="KW-0963">Cytoplasm</keyword>
<keyword id="KW-0444">Lipid biosynthesis</keyword>
<keyword id="KW-0443">Lipid metabolism</keyword>
<keyword id="KW-0594">Phospholipid biosynthesis</keyword>
<keyword id="KW-1208">Phospholipid metabolism</keyword>
<keyword id="KW-0808">Transferase</keyword>
<name>PLSX_THEM4</name>
<gene>
    <name evidence="1" type="primary">plsX</name>
    <name type="ordered locus">Tmel_0472</name>
</gene>
<comment type="function">
    <text evidence="1">Catalyzes the reversible formation of acyl-phosphate (acyl-PO(4)) from acyl-[acyl-carrier-protein] (acyl-ACP). This enzyme utilizes acyl-ACP as fatty acyl donor, but not acyl-CoA.</text>
</comment>
<comment type="catalytic activity">
    <reaction evidence="1">
        <text>a fatty acyl-[ACP] + phosphate = an acyl phosphate + holo-[ACP]</text>
        <dbReference type="Rhea" id="RHEA:42292"/>
        <dbReference type="Rhea" id="RHEA-COMP:9685"/>
        <dbReference type="Rhea" id="RHEA-COMP:14125"/>
        <dbReference type="ChEBI" id="CHEBI:43474"/>
        <dbReference type="ChEBI" id="CHEBI:59918"/>
        <dbReference type="ChEBI" id="CHEBI:64479"/>
        <dbReference type="ChEBI" id="CHEBI:138651"/>
        <dbReference type="EC" id="2.3.1.274"/>
    </reaction>
</comment>
<comment type="pathway">
    <text evidence="1">Lipid metabolism; phospholipid metabolism.</text>
</comment>
<comment type="subunit">
    <text evidence="1">Homodimer. Probably interacts with PlsY.</text>
</comment>
<comment type="subcellular location">
    <subcellularLocation>
        <location evidence="1">Cytoplasm</location>
    </subcellularLocation>
    <text evidence="1">Associated with the membrane possibly through PlsY.</text>
</comment>
<comment type="similarity">
    <text evidence="1">Belongs to the PlsX family.</text>
</comment>
<reference key="1">
    <citation type="submission" date="2007-05" db="EMBL/GenBank/DDBJ databases">
        <title>Complete sequence of Thermosipho melanesiensis BI429.</title>
        <authorList>
            <consortium name="US DOE Joint Genome Institute"/>
            <person name="Copeland A."/>
            <person name="Lucas S."/>
            <person name="Lapidus A."/>
            <person name="Barry K."/>
            <person name="Glavina del Rio T."/>
            <person name="Dalin E."/>
            <person name="Tice H."/>
            <person name="Pitluck S."/>
            <person name="Chertkov O."/>
            <person name="Brettin T."/>
            <person name="Bruce D."/>
            <person name="Detter J.C."/>
            <person name="Han C."/>
            <person name="Schmutz J."/>
            <person name="Larimer F."/>
            <person name="Land M."/>
            <person name="Hauser L."/>
            <person name="Kyrpides N."/>
            <person name="Mikhailova N."/>
            <person name="Nelson K."/>
            <person name="Gogarten J.P."/>
            <person name="Noll K."/>
            <person name="Richardson P."/>
        </authorList>
    </citation>
    <scope>NUCLEOTIDE SEQUENCE [LARGE SCALE GENOMIC DNA]</scope>
    <source>
        <strain>DSM 12029 / CIP 104789 / BI429</strain>
    </source>
</reference>
<proteinExistence type="inferred from homology"/>
<accession>A6LK88</accession>
<organism>
    <name type="scientific">Thermosipho melanesiensis (strain DSM 12029 / CIP 104789 / BI429)</name>
    <dbReference type="NCBI Taxonomy" id="391009"/>
    <lineage>
        <taxon>Bacteria</taxon>
        <taxon>Thermotogati</taxon>
        <taxon>Thermotogota</taxon>
        <taxon>Thermotogae</taxon>
        <taxon>Thermotogales</taxon>
        <taxon>Fervidobacteriaceae</taxon>
        <taxon>Thermosipho</taxon>
    </lineage>
</organism>
<evidence type="ECO:0000255" key="1">
    <source>
        <dbReference type="HAMAP-Rule" id="MF_00019"/>
    </source>
</evidence>
<dbReference type="EC" id="2.3.1.274" evidence="1"/>
<dbReference type="EMBL" id="CP000716">
    <property type="protein sequence ID" value="ABR30339.1"/>
    <property type="molecule type" value="Genomic_DNA"/>
</dbReference>
<dbReference type="RefSeq" id="WP_012056700.1">
    <property type="nucleotide sequence ID" value="NC_009616.1"/>
</dbReference>
<dbReference type="SMR" id="A6LK88"/>
<dbReference type="STRING" id="391009.Tmel_0472"/>
<dbReference type="KEGG" id="tme:Tmel_0472"/>
<dbReference type="eggNOG" id="COG0416">
    <property type="taxonomic scope" value="Bacteria"/>
</dbReference>
<dbReference type="HOGENOM" id="CLU_039379_1_0_0"/>
<dbReference type="OrthoDB" id="9806408at2"/>
<dbReference type="UniPathway" id="UPA00085"/>
<dbReference type="Proteomes" id="UP000001110">
    <property type="component" value="Chromosome"/>
</dbReference>
<dbReference type="GO" id="GO:0005737">
    <property type="term" value="C:cytoplasm"/>
    <property type="evidence" value="ECO:0007669"/>
    <property type="project" value="UniProtKB-SubCell"/>
</dbReference>
<dbReference type="GO" id="GO:0043811">
    <property type="term" value="F:phosphate:acyl-[acyl carrier protein] acyltransferase activity"/>
    <property type="evidence" value="ECO:0007669"/>
    <property type="project" value="UniProtKB-UniRule"/>
</dbReference>
<dbReference type="GO" id="GO:0006633">
    <property type="term" value="P:fatty acid biosynthetic process"/>
    <property type="evidence" value="ECO:0007669"/>
    <property type="project" value="UniProtKB-UniRule"/>
</dbReference>
<dbReference type="GO" id="GO:0008654">
    <property type="term" value="P:phospholipid biosynthetic process"/>
    <property type="evidence" value="ECO:0007669"/>
    <property type="project" value="UniProtKB-KW"/>
</dbReference>
<dbReference type="Gene3D" id="3.40.718.10">
    <property type="entry name" value="Isopropylmalate Dehydrogenase"/>
    <property type="match status" value="1"/>
</dbReference>
<dbReference type="HAMAP" id="MF_00019">
    <property type="entry name" value="PlsX"/>
    <property type="match status" value="1"/>
</dbReference>
<dbReference type="InterPro" id="IPR003664">
    <property type="entry name" value="FA_synthesis"/>
</dbReference>
<dbReference type="InterPro" id="IPR012281">
    <property type="entry name" value="Phospholipid_synth_PlsX-like"/>
</dbReference>
<dbReference type="NCBIfam" id="TIGR00182">
    <property type="entry name" value="plsX"/>
    <property type="match status" value="1"/>
</dbReference>
<dbReference type="PANTHER" id="PTHR30100">
    <property type="entry name" value="FATTY ACID/PHOSPHOLIPID SYNTHESIS PROTEIN PLSX"/>
    <property type="match status" value="1"/>
</dbReference>
<dbReference type="PANTHER" id="PTHR30100:SF1">
    <property type="entry name" value="PHOSPHATE ACYLTRANSFERASE"/>
    <property type="match status" value="1"/>
</dbReference>
<dbReference type="Pfam" id="PF02504">
    <property type="entry name" value="FA_synthesis"/>
    <property type="match status" value="1"/>
</dbReference>
<dbReference type="PIRSF" id="PIRSF002465">
    <property type="entry name" value="Phsphlp_syn_PlsX"/>
    <property type="match status" value="1"/>
</dbReference>
<dbReference type="SUPFAM" id="SSF53659">
    <property type="entry name" value="Isocitrate/Isopropylmalate dehydrogenase-like"/>
    <property type="match status" value="1"/>
</dbReference>
<sequence>MKKIAIDLMGGDFAPAEILAGALSFAKDFKDVELYLVGIEDNFKNVSLPENCKKVTVEDYLPMDIKPTEALRRKKSTMYQSCKLVKENVVDAVVSAGNTGALLACATFVVGRMKNIERPTLAVPIPTKDGFCVLADAGANIDVKPSTLLQFGVMGVEYAKFLGIKNPKVGLLNVGTEENKGTQKEQEAFKLLKEHFKKNFMGNVEGNDINMGKVDVVVADGFHGNIAMKTMEGTAKLIVDVLKSNIKKNIISAIGALLMKSVFNRLKEKLDPRKYGGTFFVGVNGIVVKAHGNSDRIAIYHALKVAKDGIEASLTSNIEEAIRNVWNSRYGRD</sequence>